<feature type="chain" id="PRO_1000007725" description="5'-nucleotidase SurE">
    <location>
        <begin position="1"/>
        <end position="250"/>
    </location>
</feature>
<feature type="binding site" evidence="1">
    <location>
        <position position="8"/>
    </location>
    <ligand>
        <name>a divalent metal cation</name>
        <dbReference type="ChEBI" id="CHEBI:60240"/>
    </ligand>
</feature>
<feature type="binding site" evidence="1">
    <location>
        <position position="9"/>
    </location>
    <ligand>
        <name>a divalent metal cation</name>
        <dbReference type="ChEBI" id="CHEBI:60240"/>
    </ligand>
</feature>
<feature type="binding site" evidence="1">
    <location>
        <position position="40"/>
    </location>
    <ligand>
        <name>a divalent metal cation</name>
        <dbReference type="ChEBI" id="CHEBI:60240"/>
    </ligand>
</feature>
<feature type="binding site" evidence="1">
    <location>
        <position position="95"/>
    </location>
    <ligand>
        <name>a divalent metal cation</name>
        <dbReference type="ChEBI" id="CHEBI:60240"/>
    </ligand>
</feature>
<organism>
    <name type="scientific">Nitratidesulfovibrio vulgaris (strain DP4)</name>
    <name type="common">Desulfovibrio vulgaris</name>
    <dbReference type="NCBI Taxonomy" id="391774"/>
    <lineage>
        <taxon>Bacteria</taxon>
        <taxon>Pseudomonadati</taxon>
        <taxon>Thermodesulfobacteriota</taxon>
        <taxon>Desulfovibrionia</taxon>
        <taxon>Desulfovibrionales</taxon>
        <taxon>Desulfovibrionaceae</taxon>
        <taxon>Nitratidesulfovibrio</taxon>
    </lineage>
</organism>
<name>SURE_NITV4</name>
<reference key="1">
    <citation type="journal article" date="2009" name="Environ. Microbiol.">
        <title>Contribution of mobile genetic elements to Desulfovibrio vulgaris genome plasticity.</title>
        <authorList>
            <person name="Walker C.B."/>
            <person name="Stolyar S."/>
            <person name="Chivian D."/>
            <person name="Pinel N."/>
            <person name="Gabster J.A."/>
            <person name="Dehal P.S."/>
            <person name="He Z."/>
            <person name="Yang Z.K."/>
            <person name="Yen H.C."/>
            <person name="Zhou J."/>
            <person name="Wall J.D."/>
            <person name="Hazen T.C."/>
            <person name="Arkin A.P."/>
            <person name="Stahl D.A."/>
        </authorList>
    </citation>
    <scope>NUCLEOTIDE SEQUENCE [LARGE SCALE GENOMIC DNA]</scope>
    <source>
        <strain>DP4</strain>
    </source>
</reference>
<comment type="function">
    <text evidence="1">Nucleotidase that shows phosphatase activity on nucleoside 5'-monophosphates.</text>
</comment>
<comment type="catalytic activity">
    <reaction evidence="1">
        <text>a ribonucleoside 5'-phosphate + H2O = a ribonucleoside + phosphate</text>
        <dbReference type="Rhea" id="RHEA:12484"/>
        <dbReference type="ChEBI" id="CHEBI:15377"/>
        <dbReference type="ChEBI" id="CHEBI:18254"/>
        <dbReference type="ChEBI" id="CHEBI:43474"/>
        <dbReference type="ChEBI" id="CHEBI:58043"/>
        <dbReference type="EC" id="3.1.3.5"/>
    </reaction>
</comment>
<comment type="cofactor">
    <cofactor evidence="1">
        <name>a divalent metal cation</name>
        <dbReference type="ChEBI" id="CHEBI:60240"/>
    </cofactor>
    <text evidence="1">Binds 1 divalent metal cation per subunit.</text>
</comment>
<comment type="subcellular location">
    <subcellularLocation>
        <location evidence="1">Cytoplasm</location>
    </subcellularLocation>
</comment>
<comment type="similarity">
    <text evidence="1">Belongs to the SurE nucleotidase family.</text>
</comment>
<accession>A1VCE4</accession>
<sequence>MRIALTNDDGIQAPGLRAIYKALIEAGHTVDVVAPVTEQSAVGHAVTIAMPLRVKVFHENGFRGHGVYGTPTDCMKLGLSSLLEHKPELVVSGINAGANVGPDILYSGTVSAATEAAHMGYRAVALSYDSFRPEDISAHARHAAALLPHIEWAGLPERCVVNINYPAVPVESIKGVRVCPQTRAVWHDWYEHRTDPRGGSYWWLNGVIPPESVAPGTDRALLTEGYITVTPLRFDFTDSETLTRLASLEE</sequence>
<protein>
    <recommendedName>
        <fullName evidence="1">5'-nucleotidase SurE</fullName>
        <ecNumber evidence="1">3.1.3.5</ecNumber>
    </recommendedName>
    <alternativeName>
        <fullName evidence="1">Nucleoside 5'-monophosphate phosphohydrolase</fullName>
    </alternativeName>
</protein>
<keyword id="KW-0963">Cytoplasm</keyword>
<keyword id="KW-0378">Hydrolase</keyword>
<keyword id="KW-0479">Metal-binding</keyword>
<keyword id="KW-0547">Nucleotide-binding</keyword>
<gene>
    <name evidence="1" type="primary">surE</name>
    <name type="ordered locus">Dvul_1090</name>
</gene>
<evidence type="ECO:0000255" key="1">
    <source>
        <dbReference type="HAMAP-Rule" id="MF_00060"/>
    </source>
</evidence>
<proteinExistence type="inferred from homology"/>
<dbReference type="EC" id="3.1.3.5" evidence="1"/>
<dbReference type="EMBL" id="CP000527">
    <property type="protein sequence ID" value="ABM28110.1"/>
    <property type="molecule type" value="Genomic_DNA"/>
</dbReference>
<dbReference type="RefSeq" id="WP_011792051.1">
    <property type="nucleotide sequence ID" value="NC_008751.1"/>
</dbReference>
<dbReference type="SMR" id="A1VCE4"/>
<dbReference type="KEGG" id="dvl:Dvul_1090"/>
<dbReference type="HOGENOM" id="CLU_045192_1_2_7"/>
<dbReference type="Proteomes" id="UP000009173">
    <property type="component" value="Chromosome"/>
</dbReference>
<dbReference type="GO" id="GO:0005737">
    <property type="term" value="C:cytoplasm"/>
    <property type="evidence" value="ECO:0007669"/>
    <property type="project" value="UniProtKB-SubCell"/>
</dbReference>
<dbReference type="GO" id="GO:0008253">
    <property type="term" value="F:5'-nucleotidase activity"/>
    <property type="evidence" value="ECO:0007669"/>
    <property type="project" value="UniProtKB-UniRule"/>
</dbReference>
<dbReference type="GO" id="GO:0046872">
    <property type="term" value="F:metal ion binding"/>
    <property type="evidence" value="ECO:0007669"/>
    <property type="project" value="UniProtKB-UniRule"/>
</dbReference>
<dbReference type="GO" id="GO:0000166">
    <property type="term" value="F:nucleotide binding"/>
    <property type="evidence" value="ECO:0007669"/>
    <property type="project" value="UniProtKB-KW"/>
</dbReference>
<dbReference type="Gene3D" id="3.40.1210.10">
    <property type="entry name" value="Survival protein SurE-like phosphatase/nucleotidase"/>
    <property type="match status" value="1"/>
</dbReference>
<dbReference type="HAMAP" id="MF_00060">
    <property type="entry name" value="SurE"/>
    <property type="match status" value="1"/>
</dbReference>
<dbReference type="InterPro" id="IPR030048">
    <property type="entry name" value="SurE"/>
</dbReference>
<dbReference type="InterPro" id="IPR002828">
    <property type="entry name" value="SurE-like_Pase/nucleotidase"/>
</dbReference>
<dbReference type="InterPro" id="IPR036523">
    <property type="entry name" value="SurE-like_sf"/>
</dbReference>
<dbReference type="NCBIfam" id="NF001490">
    <property type="entry name" value="PRK00346.1-4"/>
    <property type="match status" value="1"/>
</dbReference>
<dbReference type="NCBIfam" id="TIGR00087">
    <property type="entry name" value="surE"/>
    <property type="match status" value="1"/>
</dbReference>
<dbReference type="PANTHER" id="PTHR30457">
    <property type="entry name" value="5'-NUCLEOTIDASE SURE"/>
    <property type="match status" value="1"/>
</dbReference>
<dbReference type="PANTHER" id="PTHR30457:SF0">
    <property type="entry name" value="PHOSPHATASE, PUTATIVE (AFU_ORTHOLOGUE AFUA_4G01070)-RELATED"/>
    <property type="match status" value="1"/>
</dbReference>
<dbReference type="Pfam" id="PF01975">
    <property type="entry name" value="SurE"/>
    <property type="match status" value="1"/>
</dbReference>
<dbReference type="SUPFAM" id="SSF64167">
    <property type="entry name" value="SurE-like"/>
    <property type="match status" value="1"/>
</dbReference>